<proteinExistence type="evidence at protein level"/>
<accession>Q96B02</accession>
<accession>B4DIV1</accession>
<accession>Q1XBE0</accession>
<accession>Q9H823</accession>
<accession>Q9HAG6</accession>
<accession>Q9NV07</accession>
<sequence>MASMQKRLQKELLALQNDPPPGMTLNEKSVQNSITQWIVDMEGAPGTLYEGEKFQLLFKFSSRYPFDSPQVMFTGENIPVHPHVYSNGHICLSILTEDWSPALSVQSVCLSIISMLSSCKEKRRPPDNSFYVRTCNKNPKKTKWWYHDDTC</sequence>
<comment type="function">
    <text evidence="4 5 6 8 9 10">Accepts ubiquitin from the E1 complex and catalyzes its covalent attachment to other proteins (PubMed:20061386, PubMed:21229326). Specifically monoubiquitinates the N-terminus of various substrates, including ATXN3, MAPT/TAU, POLR2H/RPB8 and STUB1/CHIP, by recognizing backbone atoms of disordered N-termini (PubMed:23560854, PubMed:23696636, PubMed:25436519). Involved in degradation of misfolded chaperone substrates by mediating monoubiquitination of STUB1/CHIP, leading to recruitment of ATXN3 to monoubiquitinated STUB1/CHIP, and restriction of the length of ubiquitin chain attached to STUB1/CHIP substrates by ATXN3. After UV irradiation, but not after mitomycin-C (MMC) treatment, acts as a specific E2 ubiquitin-conjugating enzyme for the Fanconi anemia complex by associating with E3 ubiquitin-protein ligase FANCL and catalyzing monoubiquitination of FANCD2, a key step in the DNA damage pathway (PubMed:19111657, PubMed:21229326). In vitro catalyzes 'Lys-11'-linked polyubiquitination. UBE2W-catalyzed ubiquitination also occurs in the presence of inactive RING/U-box type E3s, i.e. lacking the active site cysteine residues to form thioester bonds with ubiquitin, or even in the absence of E3, albeit at a slower rate (PubMed:25436519).</text>
</comment>
<comment type="catalytic activity">
    <reaction evidence="2 5">
        <text>S-ubiquitinyl-[E1 ubiquitin-activating enzyme]-L-cysteine + [E2 ubiquitin-conjugating enzyme]-L-cysteine = [E1 ubiquitin-activating enzyme]-L-cysteine + S-ubiquitinyl-[E2 ubiquitin-conjugating enzyme]-L-cysteine.</text>
        <dbReference type="EC" id="2.3.2.23"/>
    </reaction>
</comment>
<comment type="catalytic activity">
    <reaction evidence="8 9">
        <text>S-ubiquitinyl-[E1 ubiquitin-activating enzyme]-L-cysteine + [acceptor protein]-N-terminal-amino acid = [E1 ubiquitin-activating enzyme]-L-cysteine + N-terminal-ubiquitinyl-[acceptor protein].</text>
        <dbReference type="EC" id="2.3.2.25"/>
    </reaction>
</comment>
<comment type="pathway">
    <text evidence="2">Protein modification; protein ubiquitination.</text>
</comment>
<comment type="subunit">
    <text evidence="1 4 6">Homodimer. Interacts with FANCL (PubMed:19111657, PubMed:21229326). Interacts with STUB1/CHIP (By similarity).</text>
</comment>
<comment type="interaction">
    <interactant intactId="EBI-716589">
        <id>Q96B02</id>
    </interactant>
    <interactant intactId="EBI-355710">
        <id>P48643</id>
        <label>CCT5</label>
    </interactant>
    <organismsDiffer>false</organismsDiffer>
    <experiments>3</experiments>
</comment>
<comment type="interaction">
    <interactant intactId="EBI-716589">
        <id>Q96B02</id>
    </interactant>
    <interactant intactId="EBI-2341610">
        <id>Q9NX47</id>
        <label>MARCHF5</label>
    </interactant>
    <organismsDiffer>false</organismsDiffer>
    <experiments>5</experiments>
</comment>
<comment type="interaction">
    <interactant intactId="EBI-716589">
        <id>Q96B02</id>
    </interactant>
    <interactant intactId="EBI-1050964">
        <id>O43586</id>
        <label>PSTPIP1</label>
    </interactant>
    <organismsDiffer>false</organismsDiffer>
    <experiments>4</experiments>
</comment>
<comment type="interaction">
    <interactant intactId="EBI-716589">
        <id>Q96B02</id>
    </interactant>
    <interactant intactId="EBI-348482">
        <id>Q99942</id>
        <label>RNF5</label>
    </interactant>
    <organismsDiffer>false</organismsDiffer>
    <experiments>4</experiments>
</comment>
<comment type="interaction">
    <interactant intactId="EBI-716589">
        <id>Q96B02</id>
    </interactant>
    <interactant intactId="EBI-1378139">
        <id>Q9HAT0</id>
        <label>ROPN1</label>
    </interactant>
    <organismsDiffer>false</organismsDiffer>
    <experiments>3</experiments>
</comment>
<comment type="interaction">
    <interactant intactId="EBI-716589">
        <id>Q96B02</id>
    </interactant>
    <interactant intactId="EBI-739895">
        <id>Q8N6Y0</id>
        <label>USHBP1</label>
    </interactant>
    <organismsDiffer>false</organismsDiffer>
    <experiments>3</experiments>
</comment>
<comment type="subcellular location">
    <subcellularLocation>
        <location evidence="3 6">Nucleus</location>
    </subcellularLocation>
    <text evidence="6">In the nucleus, colocalizes with FANCL.</text>
</comment>
<comment type="alternative products">
    <event type="alternative splicing"/>
    <isoform>
        <id>Q96B02-1</id>
        <name>1</name>
        <sequence type="displayed"/>
    </isoform>
    <isoform>
        <id>Q96B02-2</id>
        <name>2</name>
        <sequence type="described" ref="VSP_017943"/>
    </isoform>
    <isoform>
        <id>Q96B02-3</id>
        <name>3</name>
        <sequence type="described" ref="VSP_042974"/>
    </isoform>
</comment>
<comment type="tissue specificity">
    <text evidence="3">Widely expressed, with highest expression in brain, liver, pancreas and heart.</text>
</comment>
<comment type="PTM">
    <text evidence="7 8">Autoubiquitinated at Met-1.</text>
</comment>
<comment type="similarity">
    <text evidence="2">Belongs to the ubiquitin-conjugating enzyme family.</text>
</comment>
<name>UBE2W_HUMAN</name>
<organism>
    <name type="scientific">Homo sapiens</name>
    <name type="common">Human</name>
    <dbReference type="NCBI Taxonomy" id="9606"/>
    <lineage>
        <taxon>Eukaryota</taxon>
        <taxon>Metazoa</taxon>
        <taxon>Chordata</taxon>
        <taxon>Craniata</taxon>
        <taxon>Vertebrata</taxon>
        <taxon>Euteleostomi</taxon>
        <taxon>Mammalia</taxon>
        <taxon>Eutheria</taxon>
        <taxon>Euarchontoglires</taxon>
        <taxon>Primates</taxon>
        <taxon>Haplorrhini</taxon>
        <taxon>Catarrhini</taxon>
        <taxon>Hominidae</taxon>
        <taxon>Homo</taxon>
    </lineage>
</organism>
<feature type="chain" id="PRO_0000232689" description="Ubiquitin-conjugating enzyme E2 W">
    <location>
        <begin position="1"/>
        <end position="151"/>
    </location>
</feature>
<feature type="domain" description="UBC core" evidence="2">
    <location>
        <begin position="3"/>
        <end position="151"/>
    </location>
</feature>
<feature type="active site" description="Glycyl thioester intermediate" evidence="2">
    <location>
        <position position="91"/>
    </location>
</feature>
<feature type="cross-link" description="Peptide (Met-Gly) (interchain with G-Cter in ubiquitin)" evidence="8">
    <location>
        <position position="1"/>
    </location>
</feature>
<feature type="splice variant" id="VSP_042974" description="In isoform 3." evidence="11">
    <original>M</original>
    <variation>MLSPRGVTRARQLLPLRLWPRRSWGDGSIM</variation>
    <location>
        <position position="1"/>
    </location>
</feature>
<feature type="splice variant" id="VSP_017943" description="In isoform 2." evidence="11 12">
    <original>Q</original>
    <variation>QTTGRRVEVWFP</variation>
    <location>
        <position position="5"/>
    </location>
</feature>
<feature type="mutagenesis site" description="Impaired substrate ubiquitination of both Tau and ATXN3." evidence="9">
    <original>H</original>
    <variation>N</variation>
    <location>
        <position position="83"/>
    </location>
</feature>
<feature type="mutagenesis site" description="Loss of predominant nuclear localization." evidence="3">
    <original>C</original>
    <variation>A</variation>
    <location>
        <position position="91"/>
    </location>
</feature>
<feature type="mutagenesis site" description="Loss of ubiquitin conjugating activity." evidence="6">
    <original>C</original>
    <variation>S</variation>
    <location>
        <position position="91"/>
    </location>
</feature>
<feature type="mutagenesis site" description="Loss of ubiquitination activity." evidence="10">
    <location>
        <begin position="132"/>
        <end position="145"/>
    </location>
</feature>
<feature type="mutagenesis site" description="Loss of ubiquitination activity toward various substrates, including POLR2H, ATXN3, STUB1 and MAPT." evidence="10">
    <original>W</original>
    <variation>E</variation>
    <location>
        <position position="144"/>
    </location>
</feature>
<feature type="sequence conflict" description="In Ref. 2; BAB13883." evidence="13" ref="2">
    <original>N</original>
    <variation>S</variation>
    <location>
        <position position="26"/>
    </location>
</feature>
<feature type="sequence conflict" description="In Ref. 2; BAA91954." evidence="13" ref="2">
    <original>P</original>
    <variation>S</variation>
    <location>
        <position position="45"/>
    </location>
</feature>
<feature type="helix" evidence="16">
    <location>
        <begin position="6"/>
        <end position="17"/>
    </location>
</feature>
<feature type="strand" evidence="17">
    <location>
        <begin position="23"/>
        <end position="26"/>
    </location>
</feature>
<feature type="strand" evidence="16">
    <location>
        <begin position="35"/>
        <end position="42"/>
    </location>
</feature>
<feature type="turn" evidence="16">
    <location>
        <begin position="48"/>
        <end position="51"/>
    </location>
</feature>
<feature type="strand" evidence="16">
    <location>
        <begin position="53"/>
        <end position="60"/>
    </location>
</feature>
<feature type="turn" evidence="16">
    <location>
        <begin position="62"/>
        <end position="66"/>
    </location>
</feature>
<feature type="strand" evidence="16">
    <location>
        <begin position="70"/>
        <end position="76"/>
    </location>
</feature>
<feature type="strand" evidence="17">
    <location>
        <begin position="88"/>
        <end position="90"/>
    </location>
</feature>
<feature type="helix" evidence="16">
    <location>
        <begin position="93"/>
        <end position="95"/>
    </location>
</feature>
<feature type="turn" evidence="16">
    <location>
        <begin position="96"/>
        <end position="98"/>
    </location>
</feature>
<feature type="helix" evidence="16">
    <location>
        <begin position="105"/>
        <end position="115"/>
    </location>
</feature>
<feature type="helix" evidence="17">
    <location>
        <begin position="128"/>
        <end position="135"/>
    </location>
</feature>
<gene>
    <name type="primary">UBE2W</name>
    <name type="synonym">UBC16</name>
</gene>
<keyword id="KW-0002">3D-structure</keyword>
<keyword id="KW-0025">Alternative splicing</keyword>
<keyword id="KW-0067">ATP-binding</keyword>
<keyword id="KW-0227">DNA damage</keyword>
<keyword id="KW-0234">DNA repair</keyword>
<keyword id="KW-0547">Nucleotide-binding</keyword>
<keyword id="KW-0539">Nucleus</keyword>
<keyword id="KW-1267">Proteomics identification</keyword>
<keyword id="KW-1185">Reference proteome</keyword>
<keyword id="KW-0808">Transferase</keyword>
<keyword id="KW-0832">Ubl conjugation</keyword>
<keyword id="KW-0833">Ubl conjugation pathway</keyword>
<dbReference type="EC" id="2.3.2.23" evidence="5"/>
<dbReference type="EC" id="2.3.2.25" evidence="8 9"/>
<dbReference type="EMBL" id="AY948289">
    <property type="protein sequence ID" value="AAY24555.1"/>
    <property type="molecule type" value="mRNA"/>
</dbReference>
<dbReference type="EMBL" id="AK001873">
    <property type="protein sequence ID" value="BAA91954.1"/>
    <property type="molecule type" value="mRNA"/>
</dbReference>
<dbReference type="EMBL" id="AK021735">
    <property type="protein sequence ID" value="BAB13883.1"/>
    <property type="molecule type" value="mRNA"/>
</dbReference>
<dbReference type="EMBL" id="AK024050">
    <property type="protein sequence ID" value="BAB14800.1"/>
    <property type="molecule type" value="mRNA"/>
</dbReference>
<dbReference type="EMBL" id="AK295792">
    <property type="protein sequence ID" value="BAG58613.1"/>
    <property type="molecule type" value="mRNA"/>
</dbReference>
<dbReference type="EMBL" id="CR457275">
    <property type="protein sequence ID" value="CAG33556.1"/>
    <property type="molecule type" value="mRNA"/>
</dbReference>
<dbReference type="EMBL" id="CH471068">
    <property type="protein sequence ID" value="EAW87009.1"/>
    <property type="molecule type" value="Genomic_DNA"/>
</dbReference>
<dbReference type="EMBL" id="CH471068">
    <property type="protein sequence ID" value="EAW87011.1"/>
    <property type="molecule type" value="Genomic_DNA"/>
</dbReference>
<dbReference type="EMBL" id="AC022826">
    <property type="status" value="NOT_ANNOTATED_CDS"/>
    <property type="molecule type" value="Genomic_DNA"/>
</dbReference>
<dbReference type="EMBL" id="BC016326">
    <property type="protein sequence ID" value="AAH16326.1"/>
    <property type="molecule type" value="mRNA"/>
</dbReference>
<dbReference type="CCDS" id="CCDS47874.3">
    <molecule id="Q96B02-1"/>
</dbReference>
<dbReference type="CCDS" id="CCDS47875.3">
    <molecule id="Q96B02-2"/>
</dbReference>
<dbReference type="RefSeq" id="NP_001001481.3">
    <molecule id="Q96B02-2"/>
    <property type="nucleotide sequence ID" value="NM_001001481.4"/>
</dbReference>
<dbReference type="RefSeq" id="NP_001257944.1">
    <property type="nucleotide sequence ID" value="NM_001271015.1"/>
</dbReference>
<dbReference type="RefSeq" id="NP_060769.4">
    <molecule id="Q96B02-1"/>
    <property type="nucleotide sequence ID" value="NM_018299.4"/>
</dbReference>
<dbReference type="PDB" id="2A7L">
    <property type="method" value="X-ray"/>
    <property type="resolution" value="1.82 A"/>
    <property type="chains" value="A/B=1-117"/>
</dbReference>
<dbReference type="PDB" id="2MT6">
    <property type="method" value="NMR"/>
    <property type="chains" value="A=1-151"/>
</dbReference>
<dbReference type="PDB" id="8A58">
    <property type="method" value="X-ray"/>
    <property type="resolution" value="2.25 A"/>
    <property type="chains" value="A/B=1-151"/>
</dbReference>
<dbReference type="PDBsum" id="2A7L"/>
<dbReference type="PDBsum" id="2MT6"/>
<dbReference type="PDBsum" id="8A58"/>
<dbReference type="SMR" id="Q96B02"/>
<dbReference type="BioGRID" id="120572">
    <property type="interactions" value="101"/>
</dbReference>
<dbReference type="DIP" id="DIP-52724N"/>
<dbReference type="FunCoup" id="Q96B02">
    <property type="interactions" value="4724"/>
</dbReference>
<dbReference type="IntAct" id="Q96B02">
    <property type="interactions" value="78"/>
</dbReference>
<dbReference type="MINT" id="Q96B02"/>
<dbReference type="STRING" id="9606.ENSP00000498255"/>
<dbReference type="MoonDB" id="Q96B02">
    <property type="type" value="Predicted"/>
</dbReference>
<dbReference type="iPTMnet" id="Q96B02"/>
<dbReference type="PhosphoSitePlus" id="Q96B02"/>
<dbReference type="BioMuta" id="UBE2W"/>
<dbReference type="DMDM" id="74751754"/>
<dbReference type="jPOST" id="Q96B02"/>
<dbReference type="MassIVE" id="Q96B02"/>
<dbReference type="PaxDb" id="9606-ENSP00000397453"/>
<dbReference type="PeptideAtlas" id="Q96B02"/>
<dbReference type="ProteomicsDB" id="76030">
    <molecule id="Q96B02-1"/>
</dbReference>
<dbReference type="ProteomicsDB" id="76031">
    <molecule id="Q96B02-2"/>
</dbReference>
<dbReference type="ProteomicsDB" id="76032">
    <molecule id="Q96B02-3"/>
</dbReference>
<dbReference type="Pumba" id="Q96B02"/>
<dbReference type="Antibodypedia" id="25199">
    <property type="antibodies" value="169 antibodies from 26 providers"/>
</dbReference>
<dbReference type="DNASU" id="55284"/>
<dbReference type="Ensembl" id="ENST00000517608.5">
    <molecule id="Q96B02-3"/>
    <property type="protein sequence ID" value="ENSP00000428813.2"/>
    <property type="gene ID" value="ENSG00000104343.21"/>
</dbReference>
<dbReference type="Ensembl" id="ENST00000602593.6">
    <molecule id="Q96B02-1"/>
    <property type="protein sequence ID" value="ENSP00000473561.1"/>
    <property type="gene ID" value="ENSG00000104343.21"/>
</dbReference>
<dbReference type="Ensembl" id="ENST00000651945.1">
    <molecule id="Q96B02-2"/>
    <property type="protein sequence ID" value="ENSP00000499153.1"/>
    <property type="gene ID" value="ENSG00000104343.21"/>
</dbReference>
<dbReference type="GeneID" id="55284"/>
<dbReference type="KEGG" id="hsa:55284"/>
<dbReference type="MANE-Select" id="ENST00000602593.6">
    <property type="protein sequence ID" value="ENSP00000473561.1"/>
    <property type="RefSeq nucleotide sequence ID" value="NM_018299.6"/>
    <property type="RefSeq protein sequence ID" value="NP_060769.5"/>
</dbReference>
<dbReference type="UCSC" id="uc003xzv.4">
    <molecule id="Q96B02-1"/>
    <property type="organism name" value="human"/>
</dbReference>
<dbReference type="AGR" id="HGNC:25616"/>
<dbReference type="CTD" id="55284"/>
<dbReference type="DisGeNET" id="55284"/>
<dbReference type="GeneCards" id="UBE2W"/>
<dbReference type="HGNC" id="HGNC:25616">
    <property type="gene designation" value="UBE2W"/>
</dbReference>
<dbReference type="HPA" id="ENSG00000104343">
    <property type="expression patterns" value="Low tissue specificity"/>
</dbReference>
<dbReference type="MIM" id="614277">
    <property type="type" value="gene"/>
</dbReference>
<dbReference type="neXtProt" id="NX_Q96B02"/>
<dbReference type="OpenTargets" id="ENSG00000104343"/>
<dbReference type="PharmGKB" id="PA142670657"/>
<dbReference type="VEuPathDB" id="HostDB:ENSG00000104343"/>
<dbReference type="eggNOG" id="KOG0427">
    <property type="taxonomic scope" value="Eukaryota"/>
</dbReference>
<dbReference type="GeneTree" id="ENSGT00940000156908"/>
<dbReference type="HOGENOM" id="CLU_030988_15_1_1"/>
<dbReference type="InParanoid" id="Q96B02"/>
<dbReference type="OMA" id="WQMDIKV"/>
<dbReference type="OrthoDB" id="406833at2759"/>
<dbReference type="PAN-GO" id="Q96B02">
    <property type="GO annotations" value="4 GO annotations based on evolutionary models"/>
</dbReference>
<dbReference type="PhylomeDB" id="Q96B02"/>
<dbReference type="TreeFam" id="TF314582"/>
<dbReference type="BioCyc" id="MetaCyc:HS11901-MONOMER"/>
<dbReference type="BRENDA" id="2.3.2.24">
    <property type="organism ID" value="2681"/>
</dbReference>
<dbReference type="BRENDA" id="2.3.2.25">
    <property type="organism ID" value="2681"/>
</dbReference>
<dbReference type="PathwayCommons" id="Q96B02"/>
<dbReference type="Reactome" id="R-HSA-8866652">
    <property type="pathway name" value="Synthesis of active ubiquitin: roles of E1 and E2 enzymes"/>
</dbReference>
<dbReference type="Reactome" id="R-HSA-983168">
    <property type="pathway name" value="Antigen processing: Ubiquitination &amp; Proteasome degradation"/>
</dbReference>
<dbReference type="SignaLink" id="Q96B02"/>
<dbReference type="SIGNOR" id="Q96B02"/>
<dbReference type="UniPathway" id="UPA00143"/>
<dbReference type="BioGRID-ORCS" id="55284">
    <property type="hits" value="29 hits in 1133 CRISPR screens"/>
</dbReference>
<dbReference type="ChiTaRS" id="UBE2W">
    <property type="organism name" value="human"/>
</dbReference>
<dbReference type="EvolutionaryTrace" id="Q96B02"/>
<dbReference type="GenomeRNAi" id="55284"/>
<dbReference type="Pharos" id="Q96B02">
    <property type="development level" value="Tbio"/>
</dbReference>
<dbReference type="PRO" id="PR:Q96B02"/>
<dbReference type="Proteomes" id="UP000005640">
    <property type="component" value="Chromosome 8"/>
</dbReference>
<dbReference type="RNAct" id="Q96B02">
    <property type="molecule type" value="protein"/>
</dbReference>
<dbReference type="Bgee" id="ENSG00000104343">
    <property type="expression patterns" value="Expressed in oocyte and 187 other cell types or tissues"/>
</dbReference>
<dbReference type="ExpressionAtlas" id="Q96B02">
    <property type="expression patterns" value="baseline and differential"/>
</dbReference>
<dbReference type="GO" id="GO:0005737">
    <property type="term" value="C:cytoplasm"/>
    <property type="evidence" value="ECO:0000305"/>
    <property type="project" value="UniProt"/>
</dbReference>
<dbReference type="GO" id="GO:0005654">
    <property type="term" value="C:nucleoplasm"/>
    <property type="evidence" value="ECO:0000304"/>
    <property type="project" value="Reactome"/>
</dbReference>
<dbReference type="GO" id="GO:0005634">
    <property type="term" value="C:nucleus"/>
    <property type="evidence" value="ECO:0000318"/>
    <property type="project" value="GO_Central"/>
</dbReference>
<dbReference type="GO" id="GO:0005524">
    <property type="term" value="F:ATP binding"/>
    <property type="evidence" value="ECO:0007669"/>
    <property type="project" value="UniProtKB-KW"/>
</dbReference>
<dbReference type="GO" id="GO:0061631">
    <property type="term" value="F:ubiquitin conjugating enzyme activity"/>
    <property type="evidence" value="ECO:0000314"/>
    <property type="project" value="MGI"/>
</dbReference>
<dbReference type="GO" id="GO:0031625">
    <property type="term" value="F:ubiquitin protein ligase binding"/>
    <property type="evidence" value="ECO:0000353"/>
    <property type="project" value="UniProtKB"/>
</dbReference>
<dbReference type="GO" id="GO:0004842">
    <property type="term" value="F:ubiquitin-protein transferase activity"/>
    <property type="evidence" value="ECO:0000314"/>
    <property type="project" value="UniProtKB"/>
</dbReference>
<dbReference type="GO" id="GO:0140374">
    <property type="term" value="P:antiviral innate immune response"/>
    <property type="evidence" value="ECO:0000314"/>
    <property type="project" value="UniProt"/>
</dbReference>
<dbReference type="GO" id="GO:0071218">
    <property type="term" value="P:cellular response to misfolded protein"/>
    <property type="evidence" value="ECO:0000250"/>
    <property type="project" value="UniProtKB"/>
</dbReference>
<dbReference type="GO" id="GO:0006281">
    <property type="term" value="P:DNA repair"/>
    <property type="evidence" value="ECO:0007669"/>
    <property type="project" value="UniProtKB-KW"/>
</dbReference>
<dbReference type="GO" id="GO:1904262">
    <property type="term" value="P:negative regulation of TORC1 signaling"/>
    <property type="evidence" value="ECO:0000314"/>
    <property type="project" value="UniProt"/>
</dbReference>
<dbReference type="GO" id="GO:0043161">
    <property type="term" value="P:proteasome-mediated ubiquitin-dependent protein catabolic process"/>
    <property type="evidence" value="ECO:0000314"/>
    <property type="project" value="UniProt"/>
</dbReference>
<dbReference type="GO" id="GO:0070979">
    <property type="term" value="P:protein K11-linked ubiquitination"/>
    <property type="evidence" value="ECO:0000314"/>
    <property type="project" value="UniProtKB"/>
</dbReference>
<dbReference type="GO" id="GO:0006513">
    <property type="term" value="P:protein monoubiquitination"/>
    <property type="evidence" value="ECO:0000314"/>
    <property type="project" value="UniProtKB"/>
</dbReference>
<dbReference type="GO" id="GO:0000209">
    <property type="term" value="P:protein polyubiquitination"/>
    <property type="evidence" value="ECO:0000318"/>
    <property type="project" value="GO_Central"/>
</dbReference>
<dbReference type="GO" id="GO:0006515">
    <property type="term" value="P:protein quality control for misfolded or incompletely synthesized proteins"/>
    <property type="evidence" value="ECO:0000250"/>
    <property type="project" value="UniProtKB"/>
</dbReference>
<dbReference type="CDD" id="cd23808">
    <property type="entry name" value="UBCc_UBE2W"/>
    <property type="match status" value="1"/>
</dbReference>
<dbReference type="DisProt" id="DP01337"/>
<dbReference type="FunFam" id="3.10.110.10:FF:000022">
    <property type="entry name" value="Ubiquitin-conjugating enzyme E2 W"/>
    <property type="match status" value="1"/>
</dbReference>
<dbReference type="Gene3D" id="3.10.110.10">
    <property type="entry name" value="Ubiquitin Conjugating Enzyme"/>
    <property type="match status" value="1"/>
</dbReference>
<dbReference type="InterPro" id="IPR050113">
    <property type="entry name" value="Ub_conjugating_enzyme"/>
</dbReference>
<dbReference type="InterPro" id="IPR000608">
    <property type="entry name" value="UBQ-conjugat_E2_core"/>
</dbReference>
<dbReference type="InterPro" id="IPR016135">
    <property type="entry name" value="UBQ-conjugating_enzyme/RWD"/>
</dbReference>
<dbReference type="PANTHER" id="PTHR24067">
    <property type="entry name" value="UBIQUITIN-CONJUGATING ENZYME E2"/>
    <property type="match status" value="1"/>
</dbReference>
<dbReference type="Pfam" id="PF00179">
    <property type="entry name" value="UQ_con"/>
    <property type="match status" value="1"/>
</dbReference>
<dbReference type="SMART" id="SM00212">
    <property type="entry name" value="UBCc"/>
    <property type="match status" value="1"/>
</dbReference>
<dbReference type="SUPFAM" id="SSF54495">
    <property type="entry name" value="UBC-like"/>
    <property type="match status" value="1"/>
</dbReference>
<dbReference type="PROSITE" id="PS50127">
    <property type="entry name" value="UBC_2"/>
    <property type="match status" value="1"/>
</dbReference>
<evidence type="ECO:0000250" key="1">
    <source>
        <dbReference type="UniProtKB" id="Q8VDW4"/>
    </source>
</evidence>
<evidence type="ECO:0000255" key="2">
    <source>
        <dbReference type="PROSITE-ProRule" id="PRU00388"/>
    </source>
</evidence>
<evidence type="ECO:0000269" key="3">
    <source>
    </source>
</evidence>
<evidence type="ECO:0000269" key="4">
    <source>
    </source>
</evidence>
<evidence type="ECO:0000269" key="5">
    <source>
    </source>
</evidence>
<evidence type="ECO:0000269" key="6">
    <source>
    </source>
</evidence>
<evidence type="ECO:0000269" key="7">
    <source>
    </source>
</evidence>
<evidence type="ECO:0000269" key="8">
    <source>
    </source>
</evidence>
<evidence type="ECO:0000269" key="9">
    <source>
    </source>
</evidence>
<evidence type="ECO:0000269" key="10">
    <source>
    </source>
</evidence>
<evidence type="ECO:0000303" key="11">
    <source>
    </source>
</evidence>
<evidence type="ECO:0000303" key="12">
    <source>
    </source>
</evidence>
<evidence type="ECO:0000305" key="13"/>
<evidence type="ECO:0007744" key="14">
    <source>
        <dbReference type="PDB" id="2A7L"/>
    </source>
</evidence>
<evidence type="ECO:0007744" key="15">
    <source>
        <dbReference type="PDB" id="2MT6"/>
    </source>
</evidence>
<evidence type="ECO:0007829" key="16">
    <source>
        <dbReference type="PDB" id="2A7L"/>
    </source>
</evidence>
<evidence type="ECO:0007829" key="17">
    <source>
        <dbReference type="PDB" id="8A58"/>
    </source>
</evidence>
<reference key="1">
    <citation type="journal article" date="2006" name="Front. Biosci.">
        <title>Cloning, characterization and subcellular localization of a gene encoding a human Ubiquitin-conjugating enzyme (E2) homologous to the Arabidopsis thaliana UBC-16 gene product.</title>
        <authorList>
            <person name="Yin G."/>
            <person name="Ji C."/>
            <person name="Wu T."/>
            <person name="Shen Z."/>
            <person name="Xu X."/>
            <person name="Xie Y."/>
            <person name="Mao Y."/>
        </authorList>
    </citation>
    <scope>NUCLEOTIDE SEQUENCE [MRNA] (ISOFORM 2)</scope>
    <scope>SUBCELLULAR LOCATION</scope>
    <scope>TISSUE SPECIFICITY</scope>
    <scope>MUTAGENESIS OF CYS-91</scope>
</reference>
<reference key="2">
    <citation type="journal article" date="2004" name="Nat. Genet.">
        <title>Complete sequencing and characterization of 21,243 full-length human cDNAs.</title>
        <authorList>
            <person name="Ota T."/>
            <person name="Suzuki Y."/>
            <person name="Nishikawa T."/>
            <person name="Otsuki T."/>
            <person name="Sugiyama T."/>
            <person name="Irie R."/>
            <person name="Wakamatsu A."/>
            <person name="Hayashi K."/>
            <person name="Sato H."/>
            <person name="Nagai K."/>
            <person name="Kimura K."/>
            <person name="Makita H."/>
            <person name="Sekine M."/>
            <person name="Obayashi M."/>
            <person name="Nishi T."/>
            <person name="Shibahara T."/>
            <person name="Tanaka T."/>
            <person name="Ishii S."/>
            <person name="Yamamoto J."/>
            <person name="Saito K."/>
            <person name="Kawai Y."/>
            <person name="Isono Y."/>
            <person name="Nakamura Y."/>
            <person name="Nagahari K."/>
            <person name="Murakami K."/>
            <person name="Yasuda T."/>
            <person name="Iwayanagi T."/>
            <person name="Wagatsuma M."/>
            <person name="Shiratori A."/>
            <person name="Sudo H."/>
            <person name="Hosoiri T."/>
            <person name="Kaku Y."/>
            <person name="Kodaira H."/>
            <person name="Kondo H."/>
            <person name="Sugawara M."/>
            <person name="Takahashi M."/>
            <person name="Kanda K."/>
            <person name="Yokoi T."/>
            <person name="Furuya T."/>
            <person name="Kikkawa E."/>
            <person name="Omura Y."/>
            <person name="Abe K."/>
            <person name="Kamihara K."/>
            <person name="Katsuta N."/>
            <person name="Sato K."/>
            <person name="Tanikawa M."/>
            <person name="Yamazaki M."/>
            <person name="Ninomiya K."/>
            <person name="Ishibashi T."/>
            <person name="Yamashita H."/>
            <person name="Murakawa K."/>
            <person name="Fujimori K."/>
            <person name="Tanai H."/>
            <person name="Kimata M."/>
            <person name="Watanabe M."/>
            <person name="Hiraoka S."/>
            <person name="Chiba Y."/>
            <person name="Ishida S."/>
            <person name="Ono Y."/>
            <person name="Takiguchi S."/>
            <person name="Watanabe S."/>
            <person name="Yosida M."/>
            <person name="Hotuta T."/>
            <person name="Kusano J."/>
            <person name="Kanehori K."/>
            <person name="Takahashi-Fujii A."/>
            <person name="Hara H."/>
            <person name="Tanase T.-O."/>
            <person name="Nomura Y."/>
            <person name="Togiya S."/>
            <person name="Komai F."/>
            <person name="Hara R."/>
            <person name="Takeuchi K."/>
            <person name="Arita M."/>
            <person name="Imose N."/>
            <person name="Musashino K."/>
            <person name="Yuuki H."/>
            <person name="Oshima A."/>
            <person name="Sasaki N."/>
            <person name="Aotsuka S."/>
            <person name="Yoshikawa Y."/>
            <person name="Matsunawa H."/>
            <person name="Ichihara T."/>
            <person name="Shiohata N."/>
            <person name="Sano S."/>
            <person name="Moriya S."/>
            <person name="Momiyama H."/>
            <person name="Satoh N."/>
            <person name="Takami S."/>
            <person name="Terashima Y."/>
            <person name="Suzuki O."/>
            <person name="Nakagawa S."/>
            <person name="Senoh A."/>
            <person name="Mizoguchi H."/>
            <person name="Goto Y."/>
            <person name="Shimizu F."/>
            <person name="Wakebe H."/>
            <person name="Hishigaki H."/>
            <person name="Watanabe T."/>
            <person name="Sugiyama A."/>
            <person name="Takemoto M."/>
            <person name="Kawakami B."/>
            <person name="Yamazaki M."/>
            <person name="Watanabe K."/>
            <person name="Kumagai A."/>
            <person name="Itakura S."/>
            <person name="Fukuzumi Y."/>
            <person name="Fujimori Y."/>
            <person name="Komiyama M."/>
            <person name="Tashiro H."/>
            <person name="Tanigami A."/>
            <person name="Fujiwara T."/>
            <person name="Ono T."/>
            <person name="Yamada K."/>
            <person name="Fujii Y."/>
            <person name="Ozaki K."/>
            <person name="Hirao M."/>
            <person name="Ohmori Y."/>
            <person name="Kawabata A."/>
            <person name="Hikiji T."/>
            <person name="Kobatake N."/>
            <person name="Inagaki H."/>
            <person name="Ikema Y."/>
            <person name="Okamoto S."/>
            <person name="Okitani R."/>
            <person name="Kawakami T."/>
            <person name="Noguchi S."/>
            <person name="Itoh T."/>
            <person name="Shigeta K."/>
            <person name="Senba T."/>
            <person name="Matsumura K."/>
            <person name="Nakajima Y."/>
            <person name="Mizuno T."/>
            <person name="Morinaga M."/>
            <person name="Sasaki M."/>
            <person name="Togashi T."/>
            <person name="Oyama M."/>
            <person name="Hata H."/>
            <person name="Watanabe M."/>
            <person name="Komatsu T."/>
            <person name="Mizushima-Sugano J."/>
            <person name="Satoh T."/>
            <person name="Shirai Y."/>
            <person name="Takahashi Y."/>
            <person name="Nakagawa K."/>
            <person name="Okumura K."/>
            <person name="Nagase T."/>
            <person name="Nomura N."/>
            <person name="Kikuchi H."/>
            <person name="Masuho Y."/>
            <person name="Yamashita R."/>
            <person name="Nakai K."/>
            <person name="Yada T."/>
            <person name="Nakamura Y."/>
            <person name="Ohara O."/>
            <person name="Isogai T."/>
            <person name="Sugano S."/>
        </authorList>
    </citation>
    <scope>NUCLEOTIDE SEQUENCE [LARGE SCALE MRNA] (ISOFORMS 1; 2 AND 3)</scope>
    <source>
        <tissue>Embryo</tissue>
        <tissue>Hippocampus</tissue>
        <tissue>Placenta</tissue>
    </source>
</reference>
<reference key="3">
    <citation type="submission" date="2004-06" db="EMBL/GenBank/DDBJ databases">
        <title>Cloning of human full open reading frames in Gateway(TM) system entry vector (pDONR201).</title>
        <authorList>
            <person name="Ebert L."/>
            <person name="Schick M."/>
            <person name="Neubert P."/>
            <person name="Schatten R."/>
            <person name="Henze S."/>
            <person name="Korn B."/>
        </authorList>
    </citation>
    <scope>NUCLEOTIDE SEQUENCE [LARGE SCALE MRNA] (ISOFORM 1)</scope>
</reference>
<reference key="4">
    <citation type="journal article" date="2006" name="Nature">
        <title>DNA sequence and analysis of human chromosome 8.</title>
        <authorList>
            <person name="Nusbaum C."/>
            <person name="Mikkelsen T.S."/>
            <person name="Zody M.C."/>
            <person name="Asakawa S."/>
            <person name="Taudien S."/>
            <person name="Garber M."/>
            <person name="Kodira C.D."/>
            <person name="Schueler M.G."/>
            <person name="Shimizu A."/>
            <person name="Whittaker C.A."/>
            <person name="Chang J.L."/>
            <person name="Cuomo C.A."/>
            <person name="Dewar K."/>
            <person name="FitzGerald M.G."/>
            <person name="Yang X."/>
            <person name="Allen N.R."/>
            <person name="Anderson S."/>
            <person name="Asakawa T."/>
            <person name="Blechschmidt K."/>
            <person name="Bloom T."/>
            <person name="Borowsky M.L."/>
            <person name="Butler J."/>
            <person name="Cook A."/>
            <person name="Corum B."/>
            <person name="DeArellano K."/>
            <person name="DeCaprio D."/>
            <person name="Dooley K.T."/>
            <person name="Dorris L. III"/>
            <person name="Engels R."/>
            <person name="Gloeckner G."/>
            <person name="Hafez N."/>
            <person name="Hagopian D.S."/>
            <person name="Hall J.L."/>
            <person name="Ishikawa S.K."/>
            <person name="Jaffe D.B."/>
            <person name="Kamat A."/>
            <person name="Kudoh J."/>
            <person name="Lehmann R."/>
            <person name="Lokitsang T."/>
            <person name="Macdonald P."/>
            <person name="Major J.E."/>
            <person name="Matthews C.D."/>
            <person name="Mauceli E."/>
            <person name="Menzel U."/>
            <person name="Mihalev A.H."/>
            <person name="Minoshima S."/>
            <person name="Murayama Y."/>
            <person name="Naylor J.W."/>
            <person name="Nicol R."/>
            <person name="Nguyen C."/>
            <person name="O'Leary S.B."/>
            <person name="O'Neill K."/>
            <person name="Parker S.C.J."/>
            <person name="Polley A."/>
            <person name="Raymond C.K."/>
            <person name="Reichwald K."/>
            <person name="Rodriguez J."/>
            <person name="Sasaki T."/>
            <person name="Schilhabel M."/>
            <person name="Siddiqui R."/>
            <person name="Smith C.L."/>
            <person name="Sneddon T.P."/>
            <person name="Talamas J.A."/>
            <person name="Tenzin P."/>
            <person name="Topham K."/>
            <person name="Venkataraman V."/>
            <person name="Wen G."/>
            <person name="Yamazaki S."/>
            <person name="Young S.K."/>
            <person name="Zeng Q."/>
            <person name="Zimmer A.R."/>
            <person name="Rosenthal A."/>
            <person name="Birren B.W."/>
            <person name="Platzer M."/>
            <person name="Shimizu N."/>
            <person name="Lander E.S."/>
        </authorList>
    </citation>
    <scope>NUCLEOTIDE SEQUENCE [LARGE SCALE GENOMIC DNA]</scope>
</reference>
<reference key="5">
    <citation type="submission" date="2005-07" db="EMBL/GenBank/DDBJ databases">
        <authorList>
            <person name="Mural R.J."/>
            <person name="Istrail S."/>
            <person name="Sutton G.G."/>
            <person name="Florea L."/>
            <person name="Halpern A.L."/>
            <person name="Mobarry C.M."/>
            <person name="Lippert R."/>
            <person name="Walenz B."/>
            <person name="Shatkay H."/>
            <person name="Dew I."/>
            <person name="Miller J.R."/>
            <person name="Flanigan M.J."/>
            <person name="Edwards N.J."/>
            <person name="Bolanos R."/>
            <person name="Fasulo D."/>
            <person name="Halldorsson B.V."/>
            <person name="Hannenhalli S."/>
            <person name="Turner R."/>
            <person name="Yooseph S."/>
            <person name="Lu F."/>
            <person name="Nusskern D.R."/>
            <person name="Shue B.C."/>
            <person name="Zheng X.H."/>
            <person name="Zhong F."/>
            <person name="Delcher A.L."/>
            <person name="Huson D.H."/>
            <person name="Kravitz S.A."/>
            <person name="Mouchard L."/>
            <person name="Reinert K."/>
            <person name="Remington K.A."/>
            <person name="Clark A.G."/>
            <person name="Waterman M.S."/>
            <person name="Eichler E.E."/>
            <person name="Adams M.D."/>
            <person name="Hunkapiller M.W."/>
            <person name="Myers E.W."/>
            <person name="Venter J.C."/>
        </authorList>
    </citation>
    <scope>NUCLEOTIDE SEQUENCE [LARGE SCALE GENOMIC DNA]</scope>
</reference>
<reference key="6">
    <citation type="journal article" date="2004" name="Genome Res.">
        <title>The status, quality, and expansion of the NIH full-length cDNA project: the Mammalian Gene Collection (MGC).</title>
        <authorList>
            <consortium name="The MGC Project Team"/>
        </authorList>
    </citation>
    <scope>NUCLEOTIDE SEQUENCE [LARGE SCALE MRNA] (ISOFORM 1)</scope>
    <source>
        <tissue>Urinary bladder</tissue>
    </source>
</reference>
<reference key="7">
    <citation type="journal article" date="2008" name="Mol. Cell">
        <title>Mechanistic insight into site-restricted monoubiquitination of FANCD2 by Ube2t, FANCL, and FANCI.</title>
        <authorList>
            <person name="Alpi A.F."/>
            <person name="Pace P.E."/>
            <person name="Babu M.M."/>
            <person name="Patel K.J."/>
        </authorList>
    </citation>
    <scope>FUNCTION</scope>
    <scope>INTERACTION WITH FANCL</scope>
</reference>
<reference key="8">
    <citation type="journal article" date="2010" name="J. Biol. Chem.">
        <title>The E2 ubiquitin-conjugating enzymes direct polyubiquitination to preferred lysines.</title>
        <authorList>
            <person name="David Y."/>
            <person name="Ziv T."/>
            <person name="Admon A."/>
            <person name="Navon A."/>
        </authorList>
    </citation>
    <scope>FUNCTION</scope>
    <scope>CATALYTIC ACTIVITY</scope>
</reference>
<reference key="9">
    <citation type="journal article" date="2011" name="Mol. Cells">
        <title>UBE2W interacts with FANCL and regulates the monoubiquitination of Fanconi anemia protein FANCD2.</title>
        <authorList>
            <person name="Zhang Y."/>
            <person name="Zhou X."/>
            <person name="Zhao L."/>
            <person name="Li C."/>
            <person name="Zhu H."/>
            <person name="Xu L."/>
            <person name="Shan L."/>
            <person name="Liao X."/>
            <person name="Guo Z."/>
            <person name="Huang P."/>
        </authorList>
    </citation>
    <scope>FUNCTION</scope>
    <scope>SUBCELLULAR LOCATION</scope>
    <scope>MUTAGENESIS OF CYS-91</scope>
</reference>
<reference key="10">
    <citation type="journal article" date="2013" name="Biochem. J.">
        <title>Ube2W conjugates ubiquitin to alpha-amino groups of protein N-termini.</title>
        <authorList>
            <person name="Tatham M.H."/>
            <person name="Plechanovova A."/>
            <person name="Jaffray E.G."/>
            <person name="Salmen H."/>
            <person name="Hay R.T."/>
        </authorList>
    </citation>
    <scope>FUNCTION</scope>
    <scope>CATALYTIC ACTIVITY</scope>
    <scope>UBIQUITINATION AT MET-1</scope>
    <scope>SUBSTRATE SPECIFICITY</scope>
</reference>
<reference key="11">
    <citation type="journal article" date="2013" name="J. Biol. Chem.">
        <title>The ubiquitin-conjugating enzyme (E2) Ube2w ubiquitinates the N terminus of substrates.</title>
        <authorList>
            <person name="Scaglione K.M."/>
            <person name="Basrur V."/>
            <person name="Ashraf N.S."/>
            <person name="Konen J.R."/>
            <person name="Elenitoba-Johnson K.S."/>
            <person name="Todi S.V."/>
            <person name="Paulson H.L."/>
        </authorList>
    </citation>
    <scope>FUNCTION</scope>
    <scope>CATALYTIC ACTIVITY</scope>
    <scope>SUBSTRATE SPECIFICITY</scope>
    <scope>MUTAGENESIS OF HIS-83</scope>
</reference>
<reference evidence="14" key="12">
    <citation type="journal article" date="2012" name="Mol. Cell. Proteomics">
        <title>A human ubiquitin conjugating enzyme (E2)-HECT E3 ligase structure-function screen.</title>
        <authorList>
            <person name="Sheng Y."/>
            <person name="Hong J.H."/>
            <person name="Doherty R."/>
            <person name="Srikumar T."/>
            <person name="Shloush J."/>
            <person name="Avvakumov G.V."/>
            <person name="Walker J.R."/>
            <person name="Xue S."/>
            <person name="Neculai D."/>
            <person name="Wan J.W."/>
            <person name="Kim S.K."/>
            <person name="Arrowsmith C.H."/>
            <person name="Raught B."/>
            <person name="Dhe-Paganon S."/>
        </authorList>
    </citation>
    <scope>X-RAY CRYSTALLOGRAPHY (1.82 ANGSTROMS) OF 1-117</scope>
    <scope>AUTOUBIQUITINATION</scope>
</reference>
<reference evidence="15" key="13">
    <citation type="journal article" date="2015" name="Nat. Chem. Biol.">
        <title>Intrinsic disorder drives N-terminal ubiquitination by Ube2w.</title>
        <authorList>
            <person name="Vittal V."/>
            <person name="Shi L."/>
            <person name="Wenzel D.M."/>
            <person name="Scaglione K.M."/>
            <person name="Duncan E.D."/>
            <person name="Basrur V."/>
            <person name="Elenitoba-Johnson K.S."/>
            <person name="Baker D."/>
            <person name="Paulson H.L."/>
            <person name="Brzovic P.S."/>
            <person name="Klevit R.E."/>
        </authorList>
    </citation>
    <scope>STRUCTURE BY NMR</scope>
    <scope>FUNCTION</scope>
    <scope>MUTAGENESIS OF 132-VAL--TRP-145 AND TRP-144</scope>
</reference>
<protein>
    <recommendedName>
        <fullName>Ubiquitin-conjugating enzyme E2 W</fullName>
        <ecNumber evidence="5">2.3.2.23</ecNumber>
    </recommendedName>
    <alternativeName>
        <fullName>E2 ubiquitin-conjugating enzyme W</fullName>
    </alternativeName>
    <alternativeName>
        <fullName>N-terminal E2 ubiquitin-conjugating enzyme</fullName>
        <ecNumber evidence="8 9">2.3.2.25</ecNumber>
    </alternativeName>
    <alternativeName>
        <fullName>N-terminus-conjugating E2</fullName>
    </alternativeName>
    <alternativeName>
        <fullName>Ubiquitin carrier protein W</fullName>
    </alternativeName>
    <alternativeName>
        <fullName>Ubiquitin-conjugating enzyme 16</fullName>
        <shortName>UBC-16</shortName>
    </alternativeName>
    <alternativeName>
        <fullName>Ubiquitin-protein ligase W</fullName>
    </alternativeName>
</protein>